<protein>
    <recommendedName>
        <fullName>Protein ea8.5</fullName>
    </recommendedName>
</protein>
<sequence>MSINELESEQKDWALSMLCRSGVLSPCRHHEGVYVDEGIDIESAYKYSMKVYKSNEDKSPFCNVREMTDTVQNYYHEYGGNDTCPLCTKHIDD</sequence>
<gene>
    <name type="primary">ea8.5</name>
</gene>
<name>EA85_LAMBD</name>
<keyword id="KW-1185">Reference proteome</keyword>
<organism>
    <name type="scientific">Escherichia phage lambda</name>
    <name type="common">Bacteriophage lambda</name>
    <dbReference type="NCBI Taxonomy" id="2681611"/>
    <lineage>
        <taxon>Viruses</taxon>
        <taxon>Duplodnaviria</taxon>
        <taxon>Heunggongvirae</taxon>
        <taxon>Uroviricota</taxon>
        <taxon>Caudoviricetes</taxon>
        <taxon>Lambdavirus</taxon>
        <taxon>Lambdavirus lambda</taxon>
    </lineage>
</organism>
<accession>P03755</accession>
<feature type="chain" id="PRO_0000077607" description="Protein ea8.5">
    <location>
        <begin position="1"/>
        <end position="93"/>
    </location>
</feature>
<reference key="1">
    <citation type="journal article" date="1982" name="J. Mol. Biol.">
        <title>Nucleotide sequence of bacteriophage lambda DNA.</title>
        <authorList>
            <person name="Sanger F."/>
            <person name="Coulson A.R."/>
            <person name="Hong G.F."/>
            <person name="Hill D.F."/>
            <person name="Petersen G.B."/>
        </authorList>
    </citation>
    <scope>NUCLEOTIDE SEQUENCE [LARGE SCALE GENOMIC DNA]</scope>
</reference>
<organismHost>
    <name type="scientific">Escherichia coli</name>
    <dbReference type="NCBI Taxonomy" id="562"/>
</organismHost>
<dbReference type="EMBL" id="J02459">
    <property type="protein sequence ID" value="AAA96564.1"/>
    <property type="molecule type" value="Genomic_DNA"/>
</dbReference>
<dbReference type="PIR" id="I43009">
    <property type="entry name" value="ZEBP8L"/>
</dbReference>
<dbReference type="RefSeq" id="NP_040611.1">
    <property type="nucleotide sequence ID" value="NC_001416.1"/>
</dbReference>
<dbReference type="SMR" id="P03755"/>
<dbReference type="IntAct" id="P03755">
    <property type="interactions" value="6"/>
</dbReference>
<dbReference type="GeneID" id="2703505"/>
<dbReference type="KEGG" id="vg:2703505"/>
<dbReference type="Proteomes" id="UP000001711">
    <property type="component" value="Genome"/>
</dbReference>
<dbReference type="Gene3D" id="1.10.10.1920">
    <property type="match status" value="1"/>
</dbReference>
<dbReference type="InterPro" id="IPR048531">
    <property type="entry name" value="ea8_5-like"/>
</dbReference>
<dbReference type="InterPro" id="IPR048532">
    <property type="entry name" value="ea8_5-like_sf"/>
</dbReference>
<dbReference type="Pfam" id="PF20735">
    <property type="entry name" value="Lambda_ea8_5"/>
    <property type="match status" value="1"/>
</dbReference>
<proteinExistence type="predicted"/>